<name>FAU1_PYRHO</name>
<protein>
    <recommendedName>
        <fullName evidence="1">Probable ribonuclease FAU-1</fullName>
        <ecNumber evidence="1">3.1.26.-</ecNumber>
    </recommendedName>
    <alternativeName>
        <fullName evidence="1">RNA-binding protein FAU-1</fullName>
    </alternativeName>
</protein>
<gene>
    <name evidence="1" type="primary">fau-1</name>
    <name type="ordered locus">PH0117</name>
</gene>
<proteinExistence type="inferred from homology"/>
<comment type="function">
    <text evidence="1">Probable RNase involved in rRNA stability through maturation and/or degradation of precursor rRNAs. Binds to RNA in loop regions with AU-rich sequences.</text>
</comment>
<comment type="similarity">
    <text evidence="1">Belongs to the FAU-1 family.</text>
</comment>
<comment type="sequence caution" evidence="2">
    <conflict type="erroneous initiation">
        <sequence resource="EMBL-CDS" id="BAA29186"/>
    </conflict>
</comment>
<feature type="chain" id="PRO_0000334208" description="Probable ribonuclease FAU-1">
    <location>
        <begin position="1"/>
        <end position="469"/>
    </location>
</feature>
<accession>O57857</accession>
<evidence type="ECO:0000255" key="1">
    <source>
        <dbReference type="HAMAP-Rule" id="MF_01910"/>
    </source>
</evidence>
<evidence type="ECO:0000305" key="2"/>
<reference key="1">
    <citation type="journal article" date="1998" name="DNA Res.">
        <title>Complete sequence and gene organization of the genome of a hyper-thermophilic archaebacterium, Pyrococcus horikoshii OT3.</title>
        <authorList>
            <person name="Kawarabayasi Y."/>
            <person name="Sawada M."/>
            <person name="Horikawa H."/>
            <person name="Haikawa Y."/>
            <person name="Hino Y."/>
            <person name="Yamamoto S."/>
            <person name="Sekine M."/>
            <person name="Baba S."/>
            <person name="Kosugi H."/>
            <person name="Hosoyama A."/>
            <person name="Nagai Y."/>
            <person name="Sakai M."/>
            <person name="Ogura K."/>
            <person name="Otsuka R."/>
            <person name="Nakazawa H."/>
            <person name="Takamiya M."/>
            <person name="Ohfuku Y."/>
            <person name="Funahashi T."/>
            <person name="Tanaka T."/>
            <person name="Kudoh Y."/>
            <person name="Yamazaki J."/>
            <person name="Kushida N."/>
            <person name="Oguchi A."/>
            <person name="Aoki K."/>
            <person name="Yoshizawa T."/>
            <person name="Nakamura Y."/>
            <person name="Robb F.T."/>
            <person name="Horikoshi K."/>
            <person name="Masuchi Y."/>
            <person name="Shizuya H."/>
            <person name="Kikuchi H."/>
        </authorList>
    </citation>
    <scope>NUCLEOTIDE SEQUENCE [LARGE SCALE GENOMIC DNA]</scope>
    <source>
        <strain>ATCC 700860 / DSM 12428 / JCM 9974 / NBRC 100139 / OT-3</strain>
    </source>
</reference>
<organism>
    <name type="scientific">Pyrococcus horikoshii (strain ATCC 700860 / DSM 12428 / JCM 9974 / NBRC 100139 / OT-3)</name>
    <dbReference type="NCBI Taxonomy" id="70601"/>
    <lineage>
        <taxon>Archaea</taxon>
        <taxon>Methanobacteriati</taxon>
        <taxon>Methanobacteriota</taxon>
        <taxon>Thermococci</taxon>
        <taxon>Thermococcales</taxon>
        <taxon>Thermococcaceae</taxon>
        <taxon>Pyrococcus</taxon>
    </lineage>
</organism>
<dbReference type="EC" id="3.1.26.-" evidence="1"/>
<dbReference type="EMBL" id="BA000001">
    <property type="protein sequence ID" value="BAA29186.1"/>
    <property type="status" value="ALT_INIT"/>
    <property type="molecule type" value="Genomic_DNA"/>
</dbReference>
<dbReference type="PIR" id="C71232">
    <property type="entry name" value="C71232"/>
</dbReference>
<dbReference type="RefSeq" id="WP_048053036.1">
    <property type="nucleotide sequence ID" value="NC_000961.1"/>
</dbReference>
<dbReference type="SMR" id="O57857"/>
<dbReference type="STRING" id="70601.gene:9377025"/>
<dbReference type="EnsemblBacteria" id="BAA29186">
    <property type="protein sequence ID" value="BAA29186"/>
    <property type="gene ID" value="BAA29186"/>
</dbReference>
<dbReference type="GeneID" id="1444015"/>
<dbReference type="KEGG" id="pho:PH0117"/>
<dbReference type="eggNOG" id="arCOG04307">
    <property type="taxonomic scope" value="Archaea"/>
</dbReference>
<dbReference type="OrthoDB" id="84798at2157"/>
<dbReference type="Proteomes" id="UP000000752">
    <property type="component" value="Chromosome"/>
</dbReference>
<dbReference type="GO" id="GO:0035925">
    <property type="term" value="F:mRNA 3'-UTR AU-rich region binding"/>
    <property type="evidence" value="ECO:0007669"/>
    <property type="project" value="UniProtKB-UniRule"/>
</dbReference>
<dbReference type="GO" id="GO:0016891">
    <property type="term" value="F:RNA endonuclease activity, producing 5'-phosphomonoesters"/>
    <property type="evidence" value="ECO:0007669"/>
    <property type="project" value="UniProtKB-UniRule"/>
</dbReference>
<dbReference type="GO" id="GO:0006364">
    <property type="term" value="P:rRNA processing"/>
    <property type="evidence" value="ECO:0007669"/>
    <property type="project" value="UniProtKB-UniRule"/>
</dbReference>
<dbReference type="Gene3D" id="2.40.380.10">
    <property type="entry name" value="FomD-like"/>
    <property type="match status" value="1"/>
</dbReference>
<dbReference type="HAMAP" id="MF_01910">
    <property type="entry name" value="RNA_binding_AU_1"/>
    <property type="match status" value="1"/>
</dbReference>
<dbReference type="InterPro" id="IPR007295">
    <property type="entry name" value="DUF402"/>
</dbReference>
<dbReference type="InterPro" id="IPR035930">
    <property type="entry name" value="FomD-like_sf"/>
</dbReference>
<dbReference type="InterPro" id="IPR050212">
    <property type="entry name" value="Ntdp-like"/>
</dbReference>
<dbReference type="InterPro" id="IPR019307">
    <property type="entry name" value="RNA-bd_AU-1/RNase_E/G"/>
</dbReference>
<dbReference type="InterPro" id="IPR016730">
    <property type="entry name" value="RNA-bd_FAU-1"/>
</dbReference>
<dbReference type="InterPro" id="IPR003029">
    <property type="entry name" value="S1_domain"/>
</dbReference>
<dbReference type="PANTHER" id="PTHR39159">
    <property type="match status" value="1"/>
</dbReference>
<dbReference type="PANTHER" id="PTHR39159:SF1">
    <property type="entry name" value="UPF0374 PROTEIN YGAC"/>
    <property type="match status" value="1"/>
</dbReference>
<dbReference type="Pfam" id="PF04167">
    <property type="entry name" value="DUF402"/>
    <property type="match status" value="1"/>
</dbReference>
<dbReference type="Pfam" id="PF10150">
    <property type="entry name" value="RNase_E_G"/>
    <property type="match status" value="1"/>
</dbReference>
<dbReference type="PIRSF" id="PIRSF018644">
    <property type="entry name" value="RNA-binding_FAU-1"/>
    <property type="match status" value="1"/>
</dbReference>
<dbReference type="SMART" id="SM00316">
    <property type="entry name" value="S1"/>
    <property type="match status" value="1"/>
</dbReference>
<dbReference type="SUPFAM" id="SSF159234">
    <property type="entry name" value="FomD-like"/>
    <property type="match status" value="1"/>
</dbReference>
<sequence>MSTESEISVRIRGIYSTALTKLLLDKGFKIVQPSDIIAERLGLEKSYEDFDIDIYDRNHGITVVGTKVEEIRKVLEEELIDVFFRKLPYKLYGVYKGIVVKRDDRYVYVDIGNAIGTVLIEELPDATEGDEVIVQVKKHNVLPHLSVLITIPGDYAVLIPKPIGVQRHVKISRKIRDPEERERLRILGLSVNLGEWGILWRTAAAYKEWSVLRDEIVRLSKVADKLKEAEKYSAPAEIIEGRNIYEIEFGGGAKKKLDEIRNKVVPTIEGHHQYKSYDPEFTLAVEVAEGILAKMPSQRQKISEGFIEAIVNSKGPKLGWMFTLNHVKPDGQVIKIGPGEVIEVSVKPLKVKIRRNLKPGRVYDGLEVPIEPGDYAITEIEAGKWWFVHRYYDRNGNLKGEFYNINTPVEIYPDKARYIDLEVDIVKWPDGKKEIIDKEKLKEHYEDGIISEKLYKSVLRIVQEIYEKV</sequence>
<keyword id="KW-0255">Endonuclease</keyword>
<keyword id="KW-0378">Hydrolase</keyword>
<keyword id="KW-0540">Nuclease</keyword>
<keyword id="KW-0694">RNA-binding</keyword>
<keyword id="KW-0698">rRNA processing</keyword>